<reference key="1">
    <citation type="journal article" date="2006" name="Proc. Natl. Acad. Sci. U.S.A.">
        <title>Genome reduction in Leptospira borgpetersenii reflects limited transmission potential.</title>
        <authorList>
            <person name="Bulach D.M."/>
            <person name="Zuerner R.L."/>
            <person name="Wilson P."/>
            <person name="Seemann T."/>
            <person name="McGrath A."/>
            <person name="Cullen P.A."/>
            <person name="Davis J."/>
            <person name="Johnson M."/>
            <person name="Kuczek E."/>
            <person name="Alt D.P."/>
            <person name="Peterson-Burch B."/>
            <person name="Coppel R.L."/>
            <person name="Rood J.I."/>
            <person name="Davies J.K."/>
            <person name="Adler B."/>
        </authorList>
    </citation>
    <scope>NUCLEOTIDE SEQUENCE [LARGE SCALE GENOMIC DNA]</scope>
    <source>
        <strain>L550</strain>
    </source>
</reference>
<protein>
    <recommendedName>
        <fullName evidence="1">ATP synthase subunit beta</fullName>
        <ecNumber evidence="1">7.1.2.2</ecNumber>
    </recommendedName>
    <alternativeName>
        <fullName evidence="1">ATP synthase F1 sector subunit beta</fullName>
    </alternativeName>
    <alternativeName>
        <fullName evidence="1">F-ATPase subunit beta</fullName>
    </alternativeName>
</protein>
<proteinExistence type="inferred from homology"/>
<gene>
    <name evidence="1" type="primary">atpD</name>
    <name type="ordered locus">LBL_1971</name>
</gene>
<feature type="chain" id="PRO_1000055131" description="ATP synthase subunit beta">
    <location>
        <begin position="1"/>
        <end position="467"/>
    </location>
</feature>
<feature type="binding site" evidence="1">
    <location>
        <begin position="154"/>
        <end position="161"/>
    </location>
    <ligand>
        <name>ATP</name>
        <dbReference type="ChEBI" id="CHEBI:30616"/>
    </ligand>
</feature>
<keyword id="KW-0066">ATP synthesis</keyword>
<keyword id="KW-0067">ATP-binding</keyword>
<keyword id="KW-0997">Cell inner membrane</keyword>
<keyword id="KW-1003">Cell membrane</keyword>
<keyword id="KW-0139">CF(1)</keyword>
<keyword id="KW-0375">Hydrogen ion transport</keyword>
<keyword id="KW-0406">Ion transport</keyword>
<keyword id="KW-0472">Membrane</keyword>
<keyword id="KW-0547">Nucleotide-binding</keyword>
<keyword id="KW-1278">Translocase</keyword>
<keyword id="KW-0813">Transport</keyword>
<organism>
    <name type="scientific">Leptospira borgpetersenii serovar Hardjo-bovis (strain L550)</name>
    <dbReference type="NCBI Taxonomy" id="355276"/>
    <lineage>
        <taxon>Bacteria</taxon>
        <taxon>Pseudomonadati</taxon>
        <taxon>Spirochaetota</taxon>
        <taxon>Spirochaetia</taxon>
        <taxon>Leptospirales</taxon>
        <taxon>Leptospiraceae</taxon>
        <taxon>Leptospira</taxon>
    </lineage>
</organism>
<dbReference type="EC" id="7.1.2.2" evidence="1"/>
<dbReference type="EMBL" id="CP000348">
    <property type="protein sequence ID" value="ABJ79400.1"/>
    <property type="molecule type" value="Genomic_DNA"/>
</dbReference>
<dbReference type="RefSeq" id="WP_011670483.1">
    <property type="nucleotide sequence ID" value="NC_008508.1"/>
</dbReference>
<dbReference type="SMR" id="Q04ZU5"/>
<dbReference type="KEGG" id="lbl:LBL_1971"/>
<dbReference type="HOGENOM" id="CLU_022398_0_2_12"/>
<dbReference type="GO" id="GO:0005886">
    <property type="term" value="C:plasma membrane"/>
    <property type="evidence" value="ECO:0007669"/>
    <property type="project" value="UniProtKB-SubCell"/>
</dbReference>
<dbReference type="GO" id="GO:0045259">
    <property type="term" value="C:proton-transporting ATP synthase complex"/>
    <property type="evidence" value="ECO:0007669"/>
    <property type="project" value="UniProtKB-KW"/>
</dbReference>
<dbReference type="GO" id="GO:0005524">
    <property type="term" value="F:ATP binding"/>
    <property type="evidence" value="ECO:0007669"/>
    <property type="project" value="UniProtKB-UniRule"/>
</dbReference>
<dbReference type="GO" id="GO:0016887">
    <property type="term" value="F:ATP hydrolysis activity"/>
    <property type="evidence" value="ECO:0007669"/>
    <property type="project" value="InterPro"/>
</dbReference>
<dbReference type="GO" id="GO:0046933">
    <property type="term" value="F:proton-transporting ATP synthase activity, rotational mechanism"/>
    <property type="evidence" value="ECO:0007669"/>
    <property type="project" value="UniProtKB-UniRule"/>
</dbReference>
<dbReference type="CDD" id="cd18110">
    <property type="entry name" value="ATP-synt_F1_beta_C"/>
    <property type="match status" value="1"/>
</dbReference>
<dbReference type="CDD" id="cd18115">
    <property type="entry name" value="ATP-synt_F1_beta_N"/>
    <property type="match status" value="1"/>
</dbReference>
<dbReference type="CDD" id="cd01133">
    <property type="entry name" value="F1-ATPase_beta_CD"/>
    <property type="match status" value="1"/>
</dbReference>
<dbReference type="FunFam" id="1.10.1140.10:FF:000001">
    <property type="entry name" value="ATP synthase subunit beta"/>
    <property type="match status" value="1"/>
</dbReference>
<dbReference type="FunFam" id="2.40.10.170:FF:000010">
    <property type="entry name" value="ATP synthase subunit beta"/>
    <property type="match status" value="1"/>
</dbReference>
<dbReference type="FunFam" id="3.40.50.300:FF:000004">
    <property type="entry name" value="ATP synthase subunit beta"/>
    <property type="match status" value="1"/>
</dbReference>
<dbReference type="Gene3D" id="2.40.10.170">
    <property type="match status" value="1"/>
</dbReference>
<dbReference type="Gene3D" id="1.10.1140.10">
    <property type="entry name" value="Bovine Mitochondrial F1-atpase, Atp Synthase Beta Chain, Chain D, domain 3"/>
    <property type="match status" value="1"/>
</dbReference>
<dbReference type="Gene3D" id="3.40.50.300">
    <property type="entry name" value="P-loop containing nucleotide triphosphate hydrolases"/>
    <property type="match status" value="1"/>
</dbReference>
<dbReference type="HAMAP" id="MF_01347">
    <property type="entry name" value="ATP_synth_beta_bact"/>
    <property type="match status" value="1"/>
</dbReference>
<dbReference type="InterPro" id="IPR003593">
    <property type="entry name" value="AAA+_ATPase"/>
</dbReference>
<dbReference type="InterPro" id="IPR055190">
    <property type="entry name" value="ATP-synt_VA_C"/>
</dbReference>
<dbReference type="InterPro" id="IPR005722">
    <property type="entry name" value="ATP_synth_F1_bsu"/>
</dbReference>
<dbReference type="InterPro" id="IPR020003">
    <property type="entry name" value="ATPase_a/bsu_AS"/>
</dbReference>
<dbReference type="InterPro" id="IPR050053">
    <property type="entry name" value="ATPase_alpha/beta_chains"/>
</dbReference>
<dbReference type="InterPro" id="IPR004100">
    <property type="entry name" value="ATPase_F1/V1/A1_a/bsu_N"/>
</dbReference>
<dbReference type="InterPro" id="IPR036121">
    <property type="entry name" value="ATPase_F1/V1/A1_a/bsu_N_sf"/>
</dbReference>
<dbReference type="InterPro" id="IPR000194">
    <property type="entry name" value="ATPase_F1/V1/A1_a/bsu_nucl-bd"/>
</dbReference>
<dbReference type="InterPro" id="IPR024034">
    <property type="entry name" value="ATPase_F1/V1_b/a_C"/>
</dbReference>
<dbReference type="InterPro" id="IPR027417">
    <property type="entry name" value="P-loop_NTPase"/>
</dbReference>
<dbReference type="NCBIfam" id="TIGR01039">
    <property type="entry name" value="atpD"/>
    <property type="match status" value="1"/>
</dbReference>
<dbReference type="PANTHER" id="PTHR15184">
    <property type="entry name" value="ATP SYNTHASE"/>
    <property type="match status" value="1"/>
</dbReference>
<dbReference type="PANTHER" id="PTHR15184:SF71">
    <property type="entry name" value="ATP SYNTHASE SUBUNIT BETA, MITOCHONDRIAL"/>
    <property type="match status" value="1"/>
</dbReference>
<dbReference type="Pfam" id="PF00006">
    <property type="entry name" value="ATP-synt_ab"/>
    <property type="match status" value="1"/>
</dbReference>
<dbReference type="Pfam" id="PF02874">
    <property type="entry name" value="ATP-synt_ab_N"/>
    <property type="match status" value="1"/>
</dbReference>
<dbReference type="Pfam" id="PF22919">
    <property type="entry name" value="ATP-synt_VA_C"/>
    <property type="match status" value="1"/>
</dbReference>
<dbReference type="SMART" id="SM00382">
    <property type="entry name" value="AAA"/>
    <property type="match status" value="1"/>
</dbReference>
<dbReference type="SUPFAM" id="SSF47917">
    <property type="entry name" value="C-terminal domain of alpha and beta subunits of F1 ATP synthase"/>
    <property type="match status" value="1"/>
</dbReference>
<dbReference type="SUPFAM" id="SSF50615">
    <property type="entry name" value="N-terminal domain of alpha and beta subunits of F1 ATP synthase"/>
    <property type="match status" value="1"/>
</dbReference>
<dbReference type="SUPFAM" id="SSF52540">
    <property type="entry name" value="P-loop containing nucleoside triphosphate hydrolases"/>
    <property type="match status" value="1"/>
</dbReference>
<dbReference type="PROSITE" id="PS00152">
    <property type="entry name" value="ATPASE_ALPHA_BETA"/>
    <property type="match status" value="1"/>
</dbReference>
<accession>Q04ZU5</accession>
<comment type="function">
    <text evidence="1">Produces ATP from ADP in the presence of a proton gradient across the membrane. The catalytic sites are hosted primarily by the beta subunits.</text>
</comment>
<comment type="catalytic activity">
    <reaction evidence="1">
        <text>ATP + H2O + 4 H(+)(in) = ADP + phosphate + 5 H(+)(out)</text>
        <dbReference type="Rhea" id="RHEA:57720"/>
        <dbReference type="ChEBI" id="CHEBI:15377"/>
        <dbReference type="ChEBI" id="CHEBI:15378"/>
        <dbReference type="ChEBI" id="CHEBI:30616"/>
        <dbReference type="ChEBI" id="CHEBI:43474"/>
        <dbReference type="ChEBI" id="CHEBI:456216"/>
        <dbReference type="EC" id="7.1.2.2"/>
    </reaction>
</comment>
<comment type="subunit">
    <text evidence="1">F-type ATPases have 2 components, CF(1) - the catalytic core - and CF(0) - the membrane proton channel. CF(1) has five subunits: alpha(3), beta(3), gamma(1), delta(1), epsilon(1). CF(0) has three main subunits: a(1), b(2) and c(9-12). The alpha and beta chains form an alternating ring which encloses part of the gamma chain. CF(1) is attached to CF(0) by a central stalk formed by the gamma and epsilon chains, while a peripheral stalk is formed by the delta and b chains.</text>
</comment>
<comment type="subcellular location">
    <subcellularLocation>
        <location evidence="1">Cell inner membrane</location>
        <topology evidence="1">Peripheral membrane protein</topology>
    </subcellularLocation>
</comment>
<comment type="similarity">
    <text evidence="1">Belongs to the ATPase alpha/beta chains family.</text>
</comment>
<sequence>MNKGKIKQIIGSVLDIEFENGELPEIYNALEIEATVSGKREILIAEVQTHIGGKAIRAIALSSTDGLIRGQEVTNTGKPISVPVGDATLGRIFNVLGKTIDEGPAITVKETRPIHRPAPAFDELTSKTEVFETGIKVIDLLAPYIKGGKTGLFGGAGVGKTVLIQELINNIAKQHGGFSVFAGVGERTREGNDLWREMKESGVIDKTVLCYGQMNEPPGARLRVALSALTMAEHFRDSIGTDVLLFVDNIFRFSQAGSEVSALLGRMPSAVGYQPTLSTEMGALQERITSTKKGSITSVQAIYVPADDLTDPAPANAFAHLDATTVLSRAISDKGIYPAVDPLDSTSRVMNAQVLGEEHYTVAREVQRILQRYKDLQDIIAILGMDELSEDDKVLVARARKIEKFLSQPFHVAEVFTGAPGKYVKLADTVRSFKEVISGNYDHLPEQAFYMVGSIDDAIEKAKGYKG</sequence>
<name>ATPB_LEPBL</name>
<evidence type="ECO:0000255" key="1">
    <source>
        <dbReference type="HAMAP-Rule" id="MF_01347"/>
    </source>
</evidence>